<sequence length="614" mass="67839">MTTLLRLATAGSVDDGKSTLIGRLLYDSKAVMEDQWASVEQTSKDRGHDYTDLALVTDGLRAEREQGITIDVAYRYFATPKRKFIIADTPGHIQYTRNMVTGASTAQLVIVLVDARHGLLEQSRRHAFLASLLGIRHLVLAVNKMDLLGWDQEKFDAIRDEFHAFAARLDVQDVTSIPISALHGDNVVTKSDQTPWYEGPSLLSHLEDVYIAGDRNMVDVRFPVQYVIRPHTLEHQDHRSYAGTVASGVMRSGDEVVVLPIGKTTRITAIDGPNGPVAEAFPPMAVSVRLADDIDISRGDMIARTHNQPRITQEFDATVCWMADNAVLEPGRDYVVKHTTRTVRARIAGLDYRLDVNTLHRDKTATALKLNELGRVSLRTQVPLLLDEYTRNASTGSFILIDPDTNGTVAAGMVLRDVSARTPSPNTVRHRSLVTAQDRPPRGKTVWFTGLSGSGKSSVAMLVERKLLEKGISAYVLDGDNLRHGLNADLGFSMADRAENLRRLSHVATLLADCGHLVLVPAISPLAEHRALARKVHADAGIDFFEVFCDTPLQDCERRDPKGLYAKARAGEITHFTGIDSPYQRPKNPDLRLTPDRSIDEQAQEVIDLLESSS</sequence>
<dbReference type="EC" id="2.7.7.4"/>
<dbReference type="EC" id="2.7.1.25"/>
<dbReference type="EMBL" id="AL123456">
    <property type="protein sequence ID" value="CCP44042.1"/>
    <property type="molecule type" value="Genomic_DNA"/>
</dbReference>
<dbReference type="PIR" id="B70772">
    <property type="entry name" value="B70772"/>
</dbReference>
<dbReference type="RefSeq" id="NP_215802.1">
    <property type="nucleotide sequence ID" value="NC_000962.3"/>
</dbReference>
<dbReference type="PDB" id="4BZQ">
    <property type="method" value="X-ray"/>
    <property type="resolution" value="2.10 A"/>
    <property type="chains" value="A/B=440-612"/>
</dbReference>
<dbReference type="PDB" id="4BZX">
    <property type="method" value="X-ray"/>
    <property type="resolution" value="1.70 A"/>
    <property type="chains" value="A/B=440-612"/>
</dbReference>
<dbReference type="PDB" id="4RFV">
    <property type="method" value="X-ray"/>
    <property type="resolution" value="1.69 A"/>
    <property type="chains" value="A/B=424-612"/>
</dbReference>
<dbReference type="PDBsum" id="4BZQ"/>
<dbReference type="PDBsum" id="4BZX"/>
<dbReference type="PDBsum" id="4RFV"/>
<dbReference type="SMR" id="P9WNM5"/>
<dbReference type="FunCoup" id="P9WNM5">
    <property type="interactions" value="12"/>
</dbReference>
<dbReference type="STRING" id="83332.Rv1286"/>
<dbReference type="PaxDb" id="83332-Rv1286"/>
<dbReference type="DNASU" id="886978"/>
<dbReference type="GeneID" id="886978"/>
<dbReference type="KEGG" id="mtu:Rv1286"/>
<dbReference type="KEGG" id="mtv:RVBD_1286"/>
<dbReference type="TubercuList" id="Rv1286"/>
<dbReference type="eggNOG" id="COG0529">
    <property type="taxonomic scope" value="Bacteria"/>
</dbReference>
<dbReference type="eggNOG" id="COG2895">
    <property type="taxonomic scope" value="Bacteria"/>
</dbReference>
<dbReference type="InParanoid" id="P9WNM5"/>
<dbReference type="OrthoDB" id="9804504at2"/>
<dbReference type="PhylomeDB" id="P9WNM5"/>
<dbReference type="BRENDA" id="2.7.1.25">
    <property type="organism ID" value="3445"/>
</dbReference>
<dbReference type="Reactome" id="R-MTU-936635">
    <property type="pathway name" value="Sulfate assimilation"/>
</dbReference>
<dbReference type="UniPathway" id="UPA00140">
    <property type="reaction ID" value="UER00204"/>
</dbReference>
<dbReference type="UniPathway" id="UPA00140">
    <property type="reaction ID" value="UER00205"/>
</dbReference>
<dbReference type="EvolutionaryTrace" id="P9WNM5"/>
<dbReference type="Proteomes" id="UP000001584">
    <property type="component" value="Chromosome"/>
</dbReference>
<dbReference type="GO" id="GO:0005829">
    <property type="term" value="C:cytosol"/>
    <property type="evidence" value="ECO:0000304"/>
    <property type="project" value="Reactome"/>
</dbReference>
<dbReference type="GO" id="GO:0005886">
    <property type="term" value="C:plasma membrane"/>
    <property type="evidence" value="ECO:0007005"/>
    <property type="project" value="MTBBASE"/>
</dbReference>
<dbReference type="GO" id="GO:0009336">
    <property type="term" value="C:sulfate adenylyltransferase complex (ATP)"/>
    <property type="evidence" value="ECO:0000314"/>
    <property type="project" value="MTBBASE"/>
</dbReference>
<dbReference type="GO" id="GO:0004020">
    <property type="term" value="F:adenylylsulfate kinase activity"/>
    <property type="evidence" value="ECO:0000315"/>
    <property type="project" value="MTBBASE"/>
</dbReference>
<dbReference type="GO" id="GO:0005524">
    <property type="term" value="F:ATP binding"/>
    <property type="evidence" value="ECO:0007669"/>
    <property type="project" value="UniProtKB-UniRule"/>
</dbReference>
<dbReference type="GO" id="GO:0005525">
    <property type="term" value="F:GTP binding"/>
    <property type="evidence" value="ECO:0007669"/>
    <property type="project" value="UniProtKB-UniRule"/>
</dbReference>
<dbReference type="GO" id="GO:0003924">
    <property type="term" value="F:GTPase activity"/>
    <property type="evidence" value="ECO:0007669"/>
    <property type="project" value="InterPro"/>
</dbReference>
<dbReference type="GO" id="GO:0004781">
    <property type="term" value="F:sulfate adenylyltransferase (ATP) activity"/>
    <property type="evidence" value="ECO:0007669"/>
    <property type="project" value="UniProtKB-UniRule"/>
</dbReference>
<dbReference type="GO" id="GO:0034599">
    <property type="term" value="P:cellular response to oxidative stress"/>
    <property type="evidence" value="ECO:0000270"/>
    <property type="project" value="MTBBASE"/>
</dbReference>
<dbReference type="GO" id="GO:0010438">
    <property type="term" value="P:cellular response to sulfur starvation"/>
    <property type="evidence" value="ECO:0000270"/>
    <property type="project" value="MTBBASE"/>
</dbReference>
<dbReference type="GO" id="GO:0070814">
    <property type="term" value="P:hydrogen sulfide biosynthetic process"/>
    <property type="evidence" value="ECO:0007669"/>
    <property type="project" value="UniProtKB-UniRule"/>
</dbReference>
<dbReference type="GO" id="GO:0010134">
    <property type="term" value="P:sulfate assimilation via adenylyl sulfate reduction"/>
    <property type="evidence" value="ECO:0000314"/>
    <property type="project" value="MTBBASE"/>
</dbReference>
<dbReference type="CDD" id="cd02027">
    <property type="entry name" value="APSK"/>
    <property type="match status" value="1"/>
</dbReference>
<dbReference type="CDD" id="cd04166">
    <property type="entry name" value="CysN_ATPS"/>
    <property type="match status" value="1"/>
</dbReference>
<dbReference type="CDD" id="cd03695">
    <property type="entry name" value="CysN_NodQ_II"/>
    <property type="match status" value="1"/>
</dbReference>
<dbReference type="CDD" id="cd04095">
    <property type="entry name" value="CysN_NoDQ_III"/>
    <property type="match status" value="1"/>
</dbReference>
<dbReference type="FunFam" id="3.40.50.300:FF:001639">
    <property type="entry name" value="Multifunctional fusion protein"/>
    <property type="match status" value="1"/>
</dbReference>
<dbReference type="FunFam" id="2.40.30.10:FF:000027">
    <property type="entry name" value="Sulfate adenylyltransferase subunit 1"/>
    <property type="match status" value="1"/>
</dbReference>
<dbReference type="FunFam" id="3.40.50.300:FF:000119">
    <property type="entry name" value="Sulfate adenylyltransferase subunit 1"/>
    <property type="match status" value="1"/>
</dbReference>
<dbReference type="Gene3D" id="3.40.50.300">
    <property type="entry name" value="P-loop containing nucleotide triphosphate hydrolases"/>
    <property type="match status" value="2"/>
</dbReference>
<dbReference type="Gene3D" id="2.40.30.10">
    <property type="entry name" value="Translation factors"/>
    <property type="match status" value="2"/>
</dbReference>
<dbReference type="HAMAP" id="MF_00065">
    <property type="entry name" value="Adenylyl_sulf_kinase"/>
    <property type="match status" value="1"/>
</dbReference>
<dbReference type="HAMAP" id="MF_00062">
    <property type="entry name" value="Sulf_adenylyltr_sub1"/>
    <property type="match status" value="1"/>
</dbReference>
<dbReference type="InterPro" id="IPR002891">
    <property type="entry name" value="APS_kinase"/>
</dbReference>
<dbReference type="InterPro" id="IPR041757">
    <property type="entry name" value="CysN_GTP-bd"/>
</dbReference>
<dbReference type="InterPro" id="IPR044138">
    <property type="entry name" value="CysN_II"/>
</dbReference>
<dbReference type="InterPro" id="IPR044139">
    <property type="entry name" value="CysN_NoDQ_III"/>
</dbReference>
<dbReference type="InterPro" id="IPR031157">
    <property type="entry name" value="G_TR_CS"/>
</dbReference>
<dbReference type="InterPro" id="IPR054696">
    <property type="entry name" value="GTP-eEF1A_C"/>
</dbReference>
<dbReference type="InterPro" id="IPR027417">
    <property type="entry name" value="P-loop_NTPase"/>
</dbReference>
<dbReference type="InterPro" id="IPR011779">
    <property type="entry name" value="SO4_adenylTrfase_lsu"/>
</dbReference>
<dbReference type="InterPro" id="IPR000795">
    <property type="entry name" value="T_Tr_GTP-bd_dom"/>
</dbReference>
<dbReference type="InterPro" id="IPR050100">
    <property type="entry name" value="TRAFAC_GTPase_members"/>
</dbReference>
<dbReference type="InterPro" id="IPR009000">
    <property type="entry name" value="Transl_B-barrel_sf"/>
</dbReference>
<dbReference type="InterPro" id="IPR009001">
    <property type="entry name" value="Transl_elong_EF1A/Init_IF2_C"/>
</dbReference>
<dbReference type="NCBIfam" id="TIGR00455">
    <property type="entry name" value="apsK"/>
    <property type="match status" value="1"/>
</dbReference>
<dbReference type="NCBIfam" id="TIGR02034">
    <property type="entry name" value="CysN"/>
    <property type="match status" value="1"/>
</dbReference>
<dbReference type="NCBIfam" id="NF003013">
    <property type="entry name" value="PRK03846.1"/>
    <property type="match status" value="1"/>
</dbReference>
<dbReference type="NCBIfam" id="NF004035">
    <property type="entry name" value="PRK05506.1"/>
    <property type="match status" value="1"/>
</dbReference>
<dbReference type="PANTHER" id="PTHR23115">
    <property type="entry name" value="TRANSLATION FACTOR"/>
    <property type="match status" value="1"/>
</dbReference>
<dbReference type="Pfam" id="PF01583">
    <property type="entry name" value="APS_kinase"/>
    <property type="match status" value="1"/>
</dbReference>
<dbReference type="Pfam" id="PF22594">
    <property type="entry name" value="GTP-eEF1A_C"/>
    <property type="match status" value="1"/>
</dbReference>
<dbReference type="Pfam" id="PF00009">
    <property type="entry name" value="GTP_EFTU"/>
    <property type="match status" value="1"/>
</dbReference>
<dbReference type="PRINTS" id="PR00315">
    <property type="entry name" value="ELONGATNFCT"/>
</dbReference>
<dbReference type="SUPFAM" id="SSF50465">
    <property type="entry name" value="EF-Tu/eEF-1alpha/eIF2-gamma C-terminal domain"/>
    <property type="match status" value="1"/>
</dbReference>
<dbReference type="SUPFAM" id="SSF52540">
    <property type="entry name" value="P-loop containing nucleoside triphosphate hydrolases"/>
    <property type="match status" value="2"/>
</dbReference>
<dbReference type="SUPFAM" id="SSF50447">
    <property type="entry name" value="Translation proteins"/>
    <property type="match status" value="1"/>
</dbReference>
<dbReference type="PROSITE" id="PS00301">
    <property type="entry name" value="G_TR_1"/>
    <property type="match status" value="1"/>
</dbReference>
<dbReference type="PROSITE" id="PS51722">
    <property type="entry name" value="G_TR_2"/>
    <property type="match status" value="1"/>
</dbReference>
<organism>
    <name type="scientific">Mycobacterium tuberculosis (strain ATCC 25618 / H37Rv)</name>
    <dbReference type="NCBI Taxonomy" id="83332"/>
    <lineage>
        <taxon>Bacteria</taxon>
        <taxon>Bacillati</taxon>
        <taxon>Actinomycetota</taxon>
        <taxon>Actinomycetes</taxon>
        <taxon>Mycobacteriales</taxon>
        <taxon>Mycobacteriaceae</taxon>
        <taxon>Mycobacterium</taxon>
        <taxon>Mycobacterium tuberculosis complex</taxon>
    </lineage>
</organism>
<reference key="1">
    <citation type="journal article" date="1998" name="Nature">
        <title>Deciphering the biology of Mycobacterium tuberculosis from the complete genome sequence.</title>
        <authorList>
            <person name="Cole S.T."/>
            <person name="Brosch R."/>
            <person name="Parkhill J."/>
            <person name="Garnier T."/>
            <person name="Churcher C.M."/>
            <person name="Harris D.E."/>
            <person name="Gordon S.V."/>
            <person name="Eiglmeier K."/>
            <person name="Gas S."/>
            <person name="Barry C.E. III"/>
            <person name="Tekaia F."/>
            <person name="Badcock K."/>
            <person name="Basham D."/>
            <person name="Brown D."/>
            <person name="Chillingworth T."/>
            <person name="Connor R."/>
            <person name="Davies R.M."/>
            <person name="Devlin K."/>
            <person name="Feltwell T."/>
            <person name="Gentles S."/>
            <person name="Hamlin N."/>
            <person name="Holroyd S."/>
            <person name="Hornsby T."/>
            <person name="Jagels K."/>
            <person name="Krogh A."/>
            <person name="McLean J."/>
            <person name="Moule S."/>
            <person name="Murphy L.D."/>
            <person name="Oliver S."/>
            <person name="Osborne J."/>
            <person name="Quail M.A."/>
            <person name="Rajandream M.A."/>
            <person name="Rogers J."/>
            <person name="Rutter S."/>
            <person name="Seeger K."/>
            <person name="Skelton S."/>
            <person name="Squares S."/>
            <person name="Squares R."/>
            <person name="Sulston J.E."/>
            <person name="Taylor K."/>
            <person name="Whitehead S."/>
            <person name="Barrell B.G."/>
        </authorList>
    </citation>
    <scope>NUCLEOTIDE SEQUENCE [LARGE SCALE GENOMIC DNA]</scope>
    <source>
        <strain>ATCC 25618 / H37Rv</strain>
    </source>
</reference>
<reference key="2">
    <citation type="journal article" date="2004" name="Microbiology">
        <title>The Mycobacterium tuberculosis cysD and cysNC genes form a stress-induced operon that encodes a tri-functional sulfate-activating complex.</title>
        <authorList>
            <person name="Pinto R."/>
            <person name="Tang Q.X."/>
            <person name="Britton W.J."/>
            <person name="Leyh T.S."/>
            <person name="Triccas J.A."/>
        </authorList>
    </citation>
    <scope>SUBUNIT</scope>
    <scope>INDUCTION</scope>
    <source>
        <strain>Mt103</strain>
    </source>
</reference>
<reference key="3">
    <citation type="journal article" date="2011" name="Mol. Cell. Proteomics">
        <title>Proteogenomic analysis of Mycobacterium tuberculosis by high resolution mass spectrometry.</title>
        <authorList>
            <person name="Kelkar D.S."/>
            <person name="Kumar D."/>
            <person name="Kumar P."/>
            <person name="Balakrishnan L."/>
            <person name="Muthusamy B."/>
            <person name="Yadav A.K."/>
            <person name="Shrivastava P."/>
            <person name="Marimuthu A."/>
            <person name="Anand S."/>
            <person name="Sundaram H."/>
            <person name="Kingsbury R."/>
            <person name="Harsha H.C."/>
            <person name="Nair B."/>
            <person name="Prasad T.S."/>
            <person name="Chauhan D.S."/>
            <person name="Katoch K."/>
            <person name="Katoch V.M."/>
            <person name="Kumar P."/>
            <person name="Chaerkady R."/>
            <person name="Ramachandran S."/>
            <person name="Dash D."/>
            <person name="Pandey A."/>
        </authorList>
    </citation>
    <scope>IDENTIFICATION BY MASS SPECTROMETRY [LARGE SCALE ANALYSIS]</scope>
    <source>
        <strain>ATCC 25618 / H37Rv</strain>
    </source>
</reference>
<evidence type="ECO:0000250" key="1"/>
<evidence type="ECO:0000255" key="2"/>
<evidence type="ECO:0000256" key="3">
    <source>
        <dbReference type="SAM" id="MobiDB-lite"/>
    </source>
</evidence>
<evidence type="ECO:0000269" key="4">
    <source>
    </source>
</evidence>
<evidence type="ECO:0000305" key="5"/>
<evidence type="ECO:0007829" key="6">
    <source>
        <dbReference type="PDB" id="4BZX"/>
    </source>
</evidence>
<evidence type="ECO:0007829" key="7">
    <source>
        <dbReference type="PDB" id="4RFV"/>
    </source>
</evidence>
<name>CYSNC_MYCTU</name>
<accession>P9WNM5</accession>
<accession>L0T6E9</accession>
<accession>Q10600</accession>
<feature type="chain" id="PRO_0000091537" description="Bifunctional enzyme CysN/CysC">
    <location>
        <begin position="1"/>
        <end position="614"/>
    </location>
</feature>
<feature type="domain" description="tr-type G">
    <location>
        <begin position="2"/>
        <end position="217"/>
    </location>
</feature>
<feature type="region of interest" description="Sulfate adenylyltransferase">
    <location>
        <begin position="1"/>
        <end position="441"/>
    </location>
</feature>
<feature type="region of interest" description="G1" evidence="1">
    <location>
        <begin position="11"/>
        <end position="18"/>
    </location>
</feature>
<feature type="region of interest" description="G2" evidence="1">
    <location>
        <begin position="67"/>
        <end position="71"/>
    </location>
</feature>
<feature type="region of interest" description="G3" evidence="1">
    <location>
        <begin position="88"/>
        <end position="91"/>
    </location>
</feature>
<feature type="region of interest" description="G4" evidence="1">
    <location>
        <begin position="143"/>
        <end position="146"/>
    </location>
</feature>
<feature type="region of interest" description="G5" evidence="1">
    <location>
        <begin position="180"/>
        <end position="182"/>
    </location>
</feature>
<feature type="region of interest" description="Adenylyl-sulfate kinase">
    <location>
        <begin position="442"/>
        <end position="614"/>
    </location>
</feature>
<feature type="region of interest" description="Disordered" evidence="3">
    <location>
        <begin position="578"/>
        <end position="597"/>
    </location>
</feature>
<feature type="compositionally biased region" description="Basic and acidic residues" evidence="3">
    <location>
        <begin position="587"/>
        <end position="597"/>
    </location>
</feature>
<feature type="active site" description="Phosphoserine intermediate" evidence="1">
    <location>
        <position position="524"/>
    </location>
</feature>
<feature type="binding site" evidence="1">
    <location>
        <begin position="11"/>
        <end position="18"/>
    </location>
    <ligand>
        <name>GTP</name>
        <dbReference type="ChEBI" id="CHEBI:37565"/>
    </ligand>
</feature>
<feature type="binding site" evidence="1">
    <location>
        <begin position="88"/>
        <end position="92"/>
    </location>
    <ligand>
        <name>GTP</name>
        <dbReference type="ChEBI" id="CHEBI:37565"/>
    </ligand>
</feature>
<feature type="binding site" evidence="1">
    <location>
        <begin position="143"/>
        <end position="146"/>
    </location>
    <ligand>
        <name>GTP</name>
        <dbReference type="ChEBI" id="CHEBI:37565"/>
    </ligand>
</feature>
<feature type="binding site" evidence="2">
    <location>
        <begin position="450"/>
        <end position="457"/>
    </location>
    <ligand>
        <name>ATP</name>
        <dbReference type="ChEBI" id="CHEBI:30616"/>
    </ligand>
</feature>
<feature type="strand" evidence="7">
    <location>
        <begin position="444"/>
        <end position="449"/>
    </location>
</feature>
<feature type="helix" evidence="7">
    <location>
        <begin position="456"/>
        <end position="469"/>
    </location>
</feature>
<feature type="strand" evidence="7">
    <location>
        <begin position="474"/>
        <end position="476"/>
    </location>
</feature>
<feature type="helix" evidence="7">
    <location>
        <begin position="479"/>
        <end position="482"/>
    </location>
</feature>
<feature type="turn" evidence="7">
    <location>
        <begin position="483"/>
        <end position="489"/>
    </location>
</feature>
<feature type="helix" evidence="7">
    <location>
        <begin position="494"/>
        <end position="513"/>
    </location>
</feature>
<feature type="strand" evidence="7">
    <location>
        <begin position="517"/>
        <end position="521"/>
    </location>
</feature>
<feature type="helix" evidence="7">
    <location>
        <begin position="527"/>
        <end position="540"/>
    </location>
</feature>
<feature type="strand" evidence="7">
    <location>
        <begin position="544"/>
        <end position="549"/>
    </location>
</feature>
<feature type="helix" evidence="6">
    <location>
        <begin position="553"/>
        <end position="559"/>
    </location>
</feature>
<feature type="helix" evidence="6">
    <location>
        <begin position="564"/>
        <end position="569"/>
    </location>
</feature>
<feature type="turn" evidence="6">
    <location>
        <begin position="577"/>
        <end position="579"/>
    </location>
</feature>
<feature type="strand" evidence="7">
    <location>
        <begin position="590"/>
        <end position="593"/>
    </location>
</feature>
<feature type="helix" evidence="7">
    <location>
        <begin position="599"/>
        <end position="611"/>
    </location>
</feature>
<comment type="function">
    <text evidence="1">With CysD forms the ATP sulfurylase (ATPS) that catalyzes the adenylation of sulfate producing adenosine 5'-phosphosulfate (APS) and diphosphate, the first enzymatic step in sulfur assimilation pathway. APS synthesis involves the formation of a high-energy phosphoric-sulfuric acid anhydride bond driven by GTP hydrolysis by CysN coupled to ATP hydrolysis by CysD.</text>
</comment>
<comment type="function">
    <text evidence="1">APS kinase catalyzes the synthesis of activated sulfate.</text>
</comment>
<comment type="catalytic activity">
    <reaction>
        <text>sulfate + ATP + H(+) = adenosine 5'-phosphosulfate + diphosphate</text>
        <dbReference type="Rhea" id="RHEA:18133"/>
        <dbReference type="ChEBI" id="CHEBI:15378"/>
        <dbReference type="ChEBI" id="CHEBI:16189"/>
        <dbReference type="ChEBI" id="CHEBI:30616"/>
        <dbReference type="ChEBI" id="CHEBI:33019"/>
        <dbReference type="ChEBI" id="CHEBI:58243"/>
        <dbReference type="EC" id="2.7.7.4"/>
    </reaction>
</comment>
<comment type="catalytic activity">
    <reaction>
        <text>adenosine 5'-phosphosulfate + ATP = 3'-phosphoadenylyl sulfate + ADP + H(+)</text>
        <dbReference type="Rhea" id="RHEA:24152"/>
        <dbReference type="ChEBI" id="CHEBI:15378"/>
        <dbReference type="ChEBI" id="CHEBI:30616"/>
        <dbReference type="ChEBI" id="CHEBI:58243"/>
        <dbReference type="ChEBI" id="CHEBI:58339"/>
        <dbReference type="ChEBI" id="CHEBI:456216"/>
        <dbReference type="EC" id="2.7.1.25"/>
    </reaction>
</comment>
<comment type="pathway">
    <text>Sulfur metabolism; hydrogen sulfide biosynthesis; sulfite from sulfate: step 1/3.</text>
</comment>
<comment type="pathway">
    <text>Sulfur metabolism; hydrogen sulfide biosynthesis; sulfite from sulfate: step 2/3.</text>
</comment>
<comment type="subunit">
    <text evidence="4">Heterodimer composed of CysD, the smaller subunit, and CysNC.</text>
</comment>
<comment type="induction">
    <text evidence="4">Induced by sulfur limitation and oxidative stress. Repressed by the presence of cysteine.</text>
</comment>
<comment type="similarity">
    <text evidence="5">In the C-terminal section; belongs to the APS kinase family.</text>
</comment>
<comment type="similarity">
    <text evidence="5">In the N-terminal section; belongs to the TRAFAC class translation factor GTPase superfamily. Classic translation factor GTPase family. CysN/NodQ subfamily.</text>
</comment>
<protein>
    <recommendedName>
        <fullName>Bifunctional enzyme CysN/CysC</fullName>
    </recommendedName>
    <domain>
        <recommendedName>
            <fullName>Sulfate adenylyltransferase subunit 1</fullName>
            <ecNumber>2.7.7.4</ecNumber>
        </recommendedName>
        <alternativeName>
            <fullName>ATP-sulfurylase large subunit</fullName>
        </alternativeName>
        <alternativeName>
            <fullName>Sulfate adenylate transferase</fullName>
            <shortName>SAT</shortName>
        </alternativeName>
    </domain>
    <domain>
        <recommendedName>
            <fullName>Adenylyl-sulfate kinase</fullName>
            <ecNumber>2.7.1.25</ecNumber>
        </recommendedName>
        <alternativeName>
            <fullName>APS kinase</fullName>
        </alternativeName>
        <alternativeName>
            <fullName>ATP adenosine-5'-phosphosulfate 3'-phosphotransferase</fullName>
        </alternativeName>
    </domain>
</protein>
<proteinExistence type="evidence at protein level"/>
<gene>
    <name type="primary">cysNC</name>
    <name type="synonym">cysN</name>
    <name type="ordered locus">Rv1286</name>
    <name type="ORF">MTCY373.05</name>
</gene>
<keyword id="KW-0002">3D-structure</keyword>
<keyword id="KW-0067">ATP-binding</keyword>
<keyword id="KW-0342">GTP-binding</keyword>
<keyword id="KW-0418">Kinase</keyword>
<keyword id="KW-0511">Multifunctional enzyme</keyword>
<keyword id="KW-0547">Nucleotide-binding</keyword>
<keyword id="KW-0548">Nucleotidyltransferase</keyword>
<keyword id="KW-1185">Reference proteome</keyword>
<keyword id="KW-0808">Transferase</keyword>